<proteinExistence type="evidence at transcript level"/>
<protein>
    <recommendedName>
        <fullName>Chalcone synthase 1</fullName>
        <ecNumber>2.3.1.74</ecNumber>
    </recommendedName>
    <alternativeName>
        <fullName>Naringenin-chalcone synthase 1</fullName>
    </alternativeName>
</protein>
<dbReference type="EC" id="2.3.1.74"/>
<dbReference type="EMBL" id="L02901">
    <property type="protein sequence ID" value="AAA02823.1"/>
    <property type="molecule type" value="mRNA"/>
</dbReference>
<dbReference type="PIR" id="S35163">
    <property type="entry name" value="S35163"/>
</dbReference>
<dbReference type="SMR" id="P30073"/>
<dbReference type="UniPathway" id="UPA00154"/>
<dbReference type="GO" id="GO:0016210">
    <property type="term" value="F:naringenin-chalcone synthase activity"/>
    <property type="evidence" value="ECO:0007669"/>
    <property type="project" value="UniProtKB-EC"/>
</dbReference>
<dbReference type="GO" id="GO:0009813">
    <property type="term" value="P:flavonoid biosynthetic process"/>
    <property type="evidence" value="ECO:0007669"/>
    <property type="project" value="UniProtKB-UniPathway"/>
</dbReference>
<dbReference type="GO" id="GO:0030639">
    <property type="term" value="P:polyketide biosynthetic process"/>
    <property type="evidence" value="ECO:0007669"/>
    <property type="project" value="TreeGrafter"/>
</dbReference>
<dbReference type="CDD" id="cd00831">
    <property type="entry name" value="CHS_like"/>
    <property type="match status" value="1"/>
</dbReference>
<dbReference type="FunFam" id="3.40.47.10:FF:000014">
    <property type="entry name" value="Chalcone synthase 1"/>
    <property type="match status" value="1"/>
</dbReference>
<dbReference type="FunFam" id="3.40.47.10:FF:000025">
    <property type="entry name" value="Chalcone synthase 2"/>
    <property type="match status" value="1"/>
</dbReference>
<dbReference type="Gene3D" id="3.40.47.10">
    <property type="match status" value="2"/>
</dbReference>
<dbReference type="InterPro" id="IPR012328">
    <property type="entry name" value="Chalcone/stilbene_synt_C"/>
</dbReference>
<dbReference type="InterPro" id="IPR001099">
    <property type="entry name" value="Chalcone/stilbene_synt_N"/>
</dbReference>
<dbReference type="InterPro" id="IPR018088">
    <property type="entry name" value="Chalcone/stilbene_synthase_AS"/>
</dbReference>
<dbReference type="InterPro" id="IPR011141">
    <property type="entry name" value="Polyketide_synthase_type-III"/>
</dbReference>
<dbReference type="InterPro" id="IPR016039">
    <property type="entry name" value="Thiolase-like"/>
</dbReference>
<dbReference type="PANTHER" id="PTHR11877:SF62">
    <property type="entry name" value="CHALCONE SYNTHASE 7"/>
    <property type="match status" value="1"/>
</dbReference>
<dbReference type="PANTHER" id="PTHR11877">
    <property type="entry name" value="HYDROXYMETHYLGLUTARYL-COA SYNTHASE"/>
    <property type="match status" value="1"/>
</dbReference>
<dbReference type="Pfam" id="PF02797">
    <property type="entry name" value="Chal_sti_synt_C"/>
    <property type="match status" value="1"/>
</dbReference>
<dbReference type="Pfam" id="PF00195">
    <property type="entry name" value="Chal_sti_synt_N"/>
    <property type="match status" value="1"/>
</dbReference>
<dbReference type="PIRSF" id="PIRSF000451">
    <property type="entry name" value="PKS_III"/>
    <property type="match status" value="1"/>
</dbReference>
<dbReference type="SUPFAM" id="SSF53901">
    <property type="entry name" value="Thiolase-like"/>
    <property type="match status" value="2"/>
</dbReference>
<dbReference type="PROSITE" id="PS00441">
    <property type="entry name" value="CHALCONE_SYNTH"/>
    <property type="match status" value="1"/>
</dbReference>
<reference key="1">
    <citation type="journal article" date="1993" name="Plant Mol. Biol.">
        <title>Stress responses in alfalfa (Medicago sativa L.). 15. Characterization and expression patterns of members of a subset of the chalcone synthase multigene family.</title>
        <authorList>
            <person name="Junghans H."/>
            <person name="Dalkin K."/>
            <person name="Dixon R.A."/>
        </authorList>
    </citation>
    <scope>NUCLEOTIDE SEQUENCE [MRNA]</scope>
</reference>
<keyword id="KW-0012">Acyltransferase</keyword>
<keyword id="KW-0284">Flavonoid biosynthesis</keyword>
<keyword id="KW-0808">Transferase</keyword>
<name>CHS1_MEDSA</name>
<comment type="function">
    <text>The primary product of this enzyme is 4,2',4',6'-tetrahydroxychalcone (also termed naringenin-chalcone or chalcone) which can under specific conditions spontaneously isomerize into naringenin.</text>
</comment>
<comment type="catalytic activity">
    <reaction evidence="1">
        <text>(E)-4-coumaroyl-CoA + 3 malonyl-CoA + 3 H(+) = 2',4,4',6'-tetrahydroxychalcone + 3 CO2 + 4 CoA</text>
        <dbReference type="Rhea" id="RHEA:11128"/>
        <dbReference type="ChEBI" id="CHEBI:15378"/>
        <dbReference type="ChEBI" id="CHEBI:15413"/>
        <dbReference type="ChEBI" id="CHEBI:16526"/>
        <dbReference type="ChEBI" id="CHEBI:57287"/>
        <dbReference type="ChEBI" id="CHEBI:57384"/>
        <dbReference type="ChEBI" id="CHEBI:85008"/>
        <dbReference type="EC" id="2.3.1.74"/>
    </reaction>
</comment>
<comment type="pathway">
    <text>Secondary metabolite biosynthesis; flavonoid biosynthesis.</text>
</comment>
<comment type="similarity">
    <text evidence="2">Belongs to the thiolase-like superfamily. Chalcone/stilbene synthases family.</text>
</comment>
<feature type="chain" id="PRO_0000216006" description="Chalcone synthase 1">
    <location>
        <begin position="1"/>
        <end position="389"/>
    </location>
</feature>
<feature type="active site" evidence="1">
    <location>
        <position position="164"/>
    </location>
</feature>
<gene>
    <name type="primary">CHS1</name>
</gene>
<organism>
    <name type="scientific">Medicago sativa</name>
    <name type="common">Alfalfa</name>
    <dbReference type="NCBI Taxonomy" id="3879"/>
    <lineage>
        <taxon>Eukaryota</taxon>
        <taxon>Viridiplantae</taxon>
        <taxon>Streptophyta</taxon>
        <taxon>Embryophyta</taxon>
        <taxon>Tracheophyta</taxon>
        <taxon>Spermatophyta</taxon>
        <taxon>Magnoliopsida</taxon>
        <taxon>eudicotyledons</taxon>
        <taxon>Gunneridae</taxon>
        <taxon>Pentapetalae</taxon>
        <taxon>rosids</taxon>
        <taxon>fabids</taxon>
        <taxon>Fabales</taxon>
        <taxon>Fabaceae</taxon>
        <taxon>Papilionoideae</taxon>
        <taxon>50 kb inversion clade</taxon>
        <taxon>NPAAA clade</taxon>
        <taxon>Hologalegina</taxon>
        <taxon>IRL clade</taxon>
        <taxon>Trifolieae</taxon>
        <taxon>Medicago</taxon>
    </lineage>
</organism>
<sequence length="389" mass="42767">MVSVAEIRQAQRAEGPATIMAIGTANPANCVEQSTYPDFYFKITNSEHKVELKEKFQRMCDKSMIKRRYMYLTEEILKDNPRVCEYMAPSLAARQDMAVVVVPRLGKEAAVKAIKEWGQPKSKITHLIFCTTSGVDMPGADYQLTKLLGLRPYVKRYMMYQQGCFAGGTVLRLAKDLAENNKGARVLVVCSEETPVTFRGPSDTHLDSLVGQALFGDGAAALIVGSDPIPEIEKPIFEMVWTAHTIAPDSEGAIDGHLREAGLTFHLLKDVPGIVSKNIDKALIEAFQPLNISDYNSIFWIAHPGGPAILDQVEEKLGLKPEKMKATREVLSEYGNMSSACVLFILDEMRKKSVQAGLKTTGEGLDWGVLFGFGPGLTIETVVLHSVAI</sequence>
<evidence type="ECO:0000255" key="1">
    <source>
        <dbReference type="PROSITE-ProRule" id="PRU10023"/>
    </source>
</evidence>
<evidence type="ECO:0000305" key="2"/>
<accession>P30073</accession>